<name>RS12_BIFA0</name>
<feature type="chain" id="PRO_1000134616" description="Small ribosomal subunit protein uS12">
    <location>
        <begin position="1"/>
        <end position="123"/>
    </location>
</feature>
<feature type="modified residue" description="3-methylthioaspartic acid" evidence="1">
    <location>
        <position position="89"/>
    </location>
</feature>
<proteinExistence type="inferred from homology"/>
<reference key="1">
    <citation type="journal article" date="2009" name="J. Bacteriol.">
        <title>Genome sequence of the probiotic bacterium Bifidobacterium animalis subsp. lactis AD011.</title>
        <authorList>
            <person name="Kim J.F."/>
            <person name="Jeong H."/>
            <person name="Yu D.S."/>
            <person name="Choi S.-H."/>
            <person name="Hur C.-G."/>
            <person name="Park M.-S."/>
            <person name="Yoon S.H."/>
            <person name="Kim D.-W."/>
            <person name="Ji G.E."/>
            <person name="Park H.-S."/>
            <person name="Oh T.K."/>
        </authorList>
    </citation>
    <scope>NUCLEOTIDE SEQUENCE [LARGE SCALE GENOMIC DNA]</scope>
    <source>
        <strain>AD011</strain>
    </source>
</reference>
<protein>
    <recommendedName>
        <fullName evidence="2">Small ribosomal subunit protein uS12</fullName>
    </recommendedName>
    <alternativeName>
        <fullName evidence="3">30S ribosomal protein S12</fullName>
    </alternativeName>
</protein>
<comment type="function">
    <text evidence="2">With S4 and S5 plays an important role in translational accuracy.</text>
</comment>
<comment type="function">
    <text evidence="2">Interacts with and stabilizes bases of the 16S rRNA that are involved in tRNA selection in the A site and with the mRNA backbone. Located at the interface of the 30S and 50S subunits, it traverses the body of the 30S subunit contacting proteins on the other side and probably holding the rRNA structure together. The combined cluster of proteins S8, S12 and S17 appears to hold together the shoulder and platform of the 30S subunit.</text>
</comment>
<comment type="subunit">
    <text evidence="2">Part of the 30S ribosomal subunit. Contacts proteins S8 and S17. May interact with IF1 in the 30S initiation complex.</text>
</comment>
<comment type="similarity">
    <text evidence="2">Belongs to the universal ribosomal protein uS12 family.</text>
</comment>
<gene>
    <name evidence="2" type="primary">rpsL</name>
    <name type="ordered locus">BLA_1145</name>
</gene>
<keyword id="KW-0488">Methylation</keyword>
<keyword id="KW-1185">Reference proteome</keyword>
<keyword id="KW-0687">Ribonucleoprotein</keyword>
<keyword id="KW-0689">Ribosomal protein</keyword>
<keyword id="KW-0694">RNA-binding</keyword>
<keyword id="KW-0699">rRNA-binding</keyword>
<keyword id="KW-0820">tRNA-binding</keyword>
<sequence>MPTIEQLVRKGRRGKPKKSKTLALKGSPLRRGVCTRVYTTTPKKPNSALRKVARVRLSSGIEVTAYIPGEGHNLQEHSIVLVRGGRVKDLPGVRYHIVRGALDTQGVKDRKQGRSLYGAKKAK</sequence>
<dbReference type="EMBL" id="CP001213">
    <property type="protein sequence ID" value="ACL29433.1"/>
    <property type="molecule type" value="Genomic_DNA"/>
</dbReference>
<dbReference type="RefSeq" id="WP_012619944.1">
    <property type="nucleotide sequence ID" value="NC_011835.1"/>
</dbReference>
<dbReference type="SMR" id="B8DTV4"/>
<dbReference type="STRING" id="442563.BLA_1145"/>
<dbReference type="KEGG" id="bla:BLA_1145"/>
<dbReference type="PATRIC" id="fig|442563.4.peg.1202"/>
<dbReference type="HOGENOM" id="CLU_104295_1_2_11"/>
<dbReference type="Proteomes" id="UP000002456">
    <property type="component" value="Chromosome"/>
</dbReference>
<dbReference type="GO" id="GO:0015935">
    <property type="term" value="C:small ribosomal subunit"/>
    <property type="evidence" value="ECO:0007669"/>
    <property type="project" value="InterPro"/>
</dbReference>
<dbReference type="GO" id="GO:0019843">
    <property type="term" value="F:rRNA binding"/>
    <property type="evidence" value="ECO:0007669"/>
    <property type="project" value="UniProtKB-UniRule"/>
</dbReference>
<dbReference type="GO" id="GO:0003735">
    <property type="term" value="F:structural constituent of ribosome"/>
    <property type="evidence" value="ECO:0007669"/>
    <property type="project" value="InterPro"/>
</dbReference>
<dbReference type="GO" id="GO:0000049">
    <property type="term" value="F:tRNA binding"/>
    <property type="evidence" value="ECO:0007669"/>
    <property type="project" value="UniProtKB-UniRule"/>
</dbReference>
<dbReference type="GO" id="GO:0006412">
    <property type="term" value="P:translation"/>
    <property type="evidence" value="ECO:0007669"/>
    <property type="project" value="UniProtKB-UniRule"/>
</dbReference>
<dbReference type="CDD" id="cd03368">
    <property type="entry name" value="Ribosomal_S12"/>
    <property type="match status" value="1"/>
</dbReference>
<dbReference type="FunFam" id="2.40.50.140:FF:000001">
    <property type="entry name" value="30S ribosomal protein S12"/>
    <property type="match status" value="1"/>
</dbReference>
<dbReference type="Gene3D" id="2.40.50.140">
    <property type="entry name" value="Nucleic acid-binding proteins"/>
    <property type="match status" value="1"/>
</dbReference>
<dbReference type="HAMAP" id="MF_00403_B">
    <property type="entry name" value="Ribosomal_uS12_B"/>
    <property type="match status" value="1"/>
</dbReference>
<dbReference type="InterPro" id="IPR012340">
    <property type="entry name" value="NA-bd_OB-fold"/>
</dbReference>
<dbReference type="InterPro" id="IPR006032">
    <property type="entry name" value="Ribosomal_uS12"/>
</dbReference>
<dbReference type="InterPro" id="IPR005679">
    <property type="entry name" value="Ribosomal_uS12_bac"/>
</dbReference>
<dbReference type="NCBIfam" id="TIGR00981">
    <property type="entry name" value="rpsL_bact"/>
    <property type="match status" value="1"/>
</dbReference>
<dbReference type="PANTHER" id="PTHR11652">
    <property type="entry name" value="30S RIBOSOMAL PROTEIN S12 FAMILY MEMBER"/>
    <property type="match status" value="1"/>
</dbReference>
<dbReference type="Pfam" id="PF00164">
    <property type="entry name" value="Ribosom_S12_S23"/>
    <property type="match status" value="1"/>
</dbReference>
<dbReference type="PIRSF" id="PIRSF002133">
    <property type="entry name" value="Ribosomal_S12/S23"/>
    <property type="match status" value="1"/>
</dbReference>
<dbReference type="PRINTS" id="PR01034">
    <property type="entry name" value="RIBOSOMALS12"/>
</dbReference>
<dbReference type="SUPFAM" id="SSF50249">
    <property type="entry name" value="Nucleic acid-binding proteins"/>
    <property type="match status" value="1"/>
</dbReference>
<dbReference type="PROSITE" id="PS00055">
    <property type="entry name" value="RIBOSOMAL_S12"/>
    <property type="match status" value="1"/>
</dbReference>
<accession>B8DTV4</accession>
<evidence type="ECO:0000250" key="1"/>
<evidence type="ECO:0000255" key="2">
    <source>
        <dbReference type="HAMAP-Rule" id="MF_00403"/>
    </source>
</evidence>
<evidence type="ECO:0000305" key="3"/>
<organism>
    <name type="scientific">Bifidobacterium animalis subsp. lactis (strain AD011)</name>
    <dbReference type="NCBI Taxonomy" id="442563"/>
    <lineage>
        <taxon>Bacteria</taxon>
        <taxon>Bacillati</taxon>
        <taxon>Actinomycetota</taxon>
        <taxon>Actinomycetes</taxon>
        <taxon>Bifidobacteriales</taxon>
        <taxon>Bifidobacteriaceae</taxon>
        <taxon>Bifidobacterium</taxon>
    </lineage>
</organism>